<organism>
    <name type="scientific">Yersinia enterocolitica serotype O:8 / biotype 1B (strain NCTC 13174 / 8081)</name>
    <dbReference type="NCBI Taxonomy" id="393305"/>
    <lineage>
        <taxon>Bacteria</taxon>
        <taxon>Pseudomonadati</taxon>
        <taxon>Pseudomonadota</taxon>
        <taxon>Gammaproteobacteria</taxon>
        <taxon>Enterobacterales</taxon>
        <taxon>Yersiniaceae</taxon>
        <taxon>Yersinia</taxon>
    </lineage>
</organism>
<dbReference type="EC" id="2.7.7.3" evidence="1"/>
<dbReference type="EMBL" id="AM286415">
    <property type="protein sequence ID" value="CAL10209.1"/>
    <property type="molecule type" value="Genomic_DNA"/>
</dbReference>
<dbReference type="RefSeq" id="WP_005175949.1">
    <property type="nucleotide sequence ID" value="NC_008800.1"/>
</dbReference>
<dbReference type="RefSeq" id="YP_001004461.1">
    <property type="nucleotide sequence ID" value="NC_008800.1"/>
</dbReference>
<dbReference type="SMR" id="A1JHR9"/>
<dbReference type="KEGG" id="yen:YE0067"/>
<dbReference type="PATRIC" id="fig|393305.7.peg.156"/>
<dbReference type="eggNOG" id="COG0669">
    <property type="taxonomic scope" value="Bacteria"/>
</dbReference>
<dbReference type="HOGENOM" id="CLU_100149_0_1_6"/>
<dbReference type="OrthoDB" id="9806661at2"/>
<dbReference type="UniPathway" id="UPA00241">
    <property type="reaction ID" value="UER00355"/>
</dbReference>
<dbReference type="Proteomes" id="UP000000642">
    <property type="component" value="Chromosome"/>
</dbReference>
<dbReference type="GO" id="GO:0005737">
    <property type="term" value="C:cytoplasm"/>
    <property type="evidence" value="ECO:0007669"/>
    <property type="project" value="UniProtKB-SubCell"/>
</dbReference>
<dbReference type="GO" id="GO:0005524">
    <property type="term" value="F:ATP binding"/>
    <property type="evidence" value="ECO:0007669"/>
    <property type="project" value="UniProtKB-KW"/>
</dbReference>
<dbReference type="GO" id="GO:0004595">
    <property type="term" value="F:pantetheine-phosphate adenylyltransferase activity"/>
    <property type="evidence" value="ECO:0007669"/>
    <property type="project" value="UniProtKB-UniRule"/>
</dbReference>
<dbReference type="GO" id="GO:0015937">
    <property type="term" value="P:coenzyme A biosynthetic process"/>
    <property type="evidence" value="ECO:0007669"/>
    <property type="project" value="UniProtKB-UniRule"/>
</dbReference>
<dbReference type="CDD" id="cd02163">
    <property type="entry name" value="PPAT"/>
    <property type="match status" value="1"/>
</dbReference>
<dbReference type="FunFam" id="3.40.50.620:FF:000012">
    <property type="entry name" value="Phosphopantetheine adenylyltransferase"/>
    <property type="match status" value="1"/>
</dbReference>
<dbReference type="Gene3D" id="3.40.50.620">
    <property type="entry name" value="HUPs"/>
    <property type="match status" value="1"/>
</dbReference>
<dbReference type="HAMAP" id="MF_00151">
    <property type="entry name" value="PPAT_bact"/>
    <property type="match status" value="1"/>
</dbReference>
<dbReference type="InterPro" id="IPR004821">
    <property type="entry name" value="Cyt_trans-like"/>
</dbReference>
<dbReference type="InterPro" id="IPR001980">
    <property type="entry name" value="PPAT"/>
</dbReference>
<dbReference type="InterPro" id="IPR014729">
    <property type="entry name" value="Rossmann-like_a/b/a_fold"/>
</dbReference>
<dbReference type="NCBIfam" id="TIGR01510">
    <property type="entry name" value="coaD_prev_kdtB"/>
    <property type="match status" value="1"/>
</dbReference>
<dbReference type="NCBIfam" id="TIGR00125">
    <property type="entry name" value="cyt_tran_rel"/>
    <property type="match status" value="1"/>
</dbReference>
<dbReference type="PANTHER" id="PTHR21342">
    <property type="entry name" value="PHOSPHOPANTETHEINE ADENYLYLTRANSFERASE"/>
    <property type="match status" value="1"/>
</dbReference>
<dbReference type="PANTHER" id="PTHR21342:SF1">
    <property type="entry name" value="PHOSPHOPANTETHEINE ADENYLYLTRANSFERASE"/>
    <property type="match status" value="1"/>
</dbReference>
<dbReference type="Pfam" id="PF01467">
    <property type="entry name" value="CTP_transf_like"/>
    <property type="match status" value="1"/>
</dbReference>
<dbReference type="PRINTS" id="PR01020">
    <property type="entry name" value="LPSBIOSNTHSS"/>
</dbReference>
<dbReference type="SUPFAM" id="SSF52374">
    <property type="entry name" value="Nucleotidylyl transferase"/>
    <property type="match status" value="1"/>
</dbReference>
<keyword id="KW-0067">ATP-binding</keyword>
<keyword id="KW-0173">Coenzyme A biosynthesis</keyword>
<keyword id="KW-0963">Cytoplasm</keyword>
<keyword id="KW-0460">Magnesium</keyword>
<keyword id="KW-0547">Nucleotide-binding</keyword>
<keyword id="KW-0548">Nucleotidyltransferase</keyword>
<keyword id="KW-0808">Transferase</keyword>
<reference key="1">
    <citation type="journal article" date="2006" name="PLoS Genet.">
        <title>The complete genome sequence and comparative genome analysis of the high pathogenicity Yersinia enterocolitica strain 8081.</title>
        <authorList>
            <person name="Thomson N.R."/>
            <person name="Howard S."/>
            <person name="Wren B.W."/>
            <person name="Holden M.T.G."/>
            <person name="Crossman L."/>
            <person name="Challis G.L."/>
            <person name="Churcher C."/>
            <person name="Mungall K."/>
            <person name="Brooks K."/>
            <person name="Chillingworth T."/>
            <person name="Feltwell T."/>
            <person name="Abdellah Z."/>
            <person name="Hauser H."/>
            <person name="Jagels K."/>
            <person name="Maddison M."/>
            <person name="Moule S."/>
            <person name="Sanders M."/>
            <person name="Whitehead S."/>
            <person name="Quail M.A."/>
            <person name="Dougan G."/>
            <person name="Parkhill J."/>
            <person name="Prentice M.B."/>
        </authorList>
    </citation>
    <scope>NUCLEOTIDE SEQUENCE [LARGE SCALE GENOMIC DNA]</scope>
    <source>
        <strain>NCTC 13174 / 8081</strain>
    </source>
</reference>
<proteinExistence type="inferred from homology"/>
<feature type="chain" id="PRO_1000011280" description="Phosphopantetheine adenylyltransferase">
    <location>
        <begin position="1"/>
        <end position="159"/>
    </location>
</feature>
<feature type="binding site" evidence="1">
    <location>
        <begin position="10"/>
        <end position="11"/>
    </location>
    <ligand>
        <name>ATP</name>
        <dbReference type="ChEBI" id="CHEBI:30616"/>
    </ligand>
</feature>
<feature type="binding site" evidence="1">
    <location>
        <position position="10"/>
    </location>
    <ligand>
        <name>substrate</name>
    </ligand>
</feature>
<feature type="binding site" evidence="1">
    <location>
        <position position="18"/>
    </location>
    <ligand>
        <name>ATP</name>
        <dbReference type="ChEBI" id="CHEBI:30616"/>
    </ligand>
</feature>
<feature type="binding site" evidence="1">
    <location>
        <position position="42"/>
    </location>
    <ligand>
        <name>substrate</name>
    </ligand>
</feature>
<feature type="binding site" evidence="1">
    <location>
        <position position="74"/>
    </location>
    <ligand>
        <name>substrate</name>
    </ligand>
</feature>
<feature type="binding site" evidence="1">
    <location>
        <position position="88"/>
    </location>
    <ligand>
        <name>substrate</name>
    </ligand>
</feature>
<feature type="binding site" evidence="1">
    <location>
        <begin position="89"/>
        <end position="91"/>
    </location>
    <ligand>
        <name>ATP</name>
        <dbReference type="ChEBI" id="CHEBI:30616"/>
    </ligand>
</feature>
<feature type="binding site" evidence="1">
    <location>
        <position position="99"/>
    </location>
    <ligand>
        <name>ATP</name>
        <dbReference type="ChEBI" id="CHEBI:30616"/>
    </ligand>
</feature>
<feature type="binding site" evidence="1">
    <location>
        <begin position="124"/>
        <end position="130"/>
    </location>
    <ligand>
        <name>ATP</name>
        <dbReference type="ChEBI" id="CHEBI:30616"/>
    </ligand>
</feature>
<feature type="site" description="Transition state stabilizer" evidence="1">
    <location>
        <position position="18"/>
    </location>
</feature>
<accession>A1JHR9</accession>
<evidence type="ECO:0000255" key="1">
    <source>
        <dbReference type="HAMAP-Rule" id="MF_00151"/>
    </source>
</evidence>
<gene>
    <name evidence="1" type="primary">coaD</name>
    <name type="ordered locus">YE0067</name>
</gene>
<protein>
    <recommendedName>
        <fullName evidence="1">Phosphopantetheine adenylyltransferase</fullName>
        <ecNumber evidence="1">2.7.7.3</ecNumber>
    </recommendedName>
    <alternativeName>
        <fullName evidence="1">Dephospho-CoA pyrophosphorylase</fullName>
    </alternativeName>
    <alternativeName>
        <fullName evidence="1">Pantetheine-phosphate adenylyltransferase</fullName>
        <shortName evidence="1">PPAT</shortName>
    </alternativeName>
</protein>
<comment type="function">
    <text evidence="1">Reversibly transfers an adenylyl group from ATP to 4'-phosphopantetheine, yielding dephospho-CoA (dPCoA) and pyrophosphate.</text>
</comment>
<comment type="catalytic activity">
    <reaction evidence="1">
        <text>(R)-4'-phosphopantetheine + ATP + H(+) = 3'-dephospho-CoA + diphosphate</text>
        <dbReference type="Rhea" id="RHEA:19801"/>
        <dbReference type="ChEBI" id="CHEBI:15378"/>
        <dbReference type="ChEBI" id="CHEBI:30616"/>
        <dbReference type="ChEBI" id="CHEBI:33019"/>
        <dbReference type="ChEBI" id="CHEBI:57328"/>
        <dbReference type="ChEBI" id="CHEBI:61723"/>
        <dbReference type="EC" id="2.7.7.3"/>
    </reaction>
</comment>
<comment type="cofactor">
    <cofactor evidence="1">
        <name>Mg(2+)</name>
        <dbReference type="ChEBI" id="CHEBI:18420"/>
    </cofactor>
</comment>
<comment type="pathway">
    <text evidence="1">Cofactor biosynthesis; coenzyme A biosynthesis; CoA from (R)-pantothenate: step 4/5.</text>
</comment>
<comment type="subunit">
    <text evidence="1">Homohexamer.</text>
</comment>
<comment type="subcellular location">
    <subcellularLocation>
        <location evidence="1">Cytoplasm</location>
    </subcellularLocation>
</comment>
<comment type="similarity">
    <text evidence="1">Belongs to the bacterial CoaD family.</text>
</comment>
<sequence length="159" mass="17716">MITKAIYPGTFDPITNGHLDLVTRASEMFSHVILAIADSSSKKPMFTLAERVILAKQVTAPLKNVEVLGFSELMAEFAKKHNANILVRGLRSVSDFEYEWQLANMNRHLMPKLESVFLMPSEKWSFISSSLVKEVARHGGDITPFLPAPVTKALMTKLA</sequence>
<name>COAD_YERE8</name>